<gene>
    <name type="primary">rpl23</name>
</gene>
<keyword id="KW-0150">Chloroplast</keyword>
<keyword id="KW-0934">Plastid</keyword>
<keyword id="KW-0687">Ribonucleoprotein</keyword>
<keyword id="KW-0689">Ribosomal protein</keyword>
<keyword id="KW-0691">RNA editing</keyword>
<keyword id="KW-0694">RNA-binding</keyword>
<keyword id="KW-0699">rRNA-binding</keyword>
<protein>
    <recommendedName>
        <fullName evidence="3">Large ribosomal subunit protein uL23c</fullName>
    </recommendedName>
    <alternativeName>
        <fullName>50S ribosomal protein L23, chloroplastic</fullName>
    </alternativeName>
</protein>
<geneLocation type="chloroplast"/>
<dbReference type="EMBL" id="AY178864">
    <property type="protein sequence ID" value="AAP29433.2"/>
    <property type="molecule type" value="Genomic_DNA"/>
</dbReference>
<dbReference type="RefSeq" id="NP_848102.2">
    <property type="nucleotide sequence ID" value="NC_004766.1"/>
</dbReference>
<dbReference type="SMR" id="Q85FI0"/>
<dbReference type="GeneID" id="807417"/>
<dbReference type="GO" id="GO:0009507">
    <property type="term" value="C:chloroplast"/>
    <property type="evidence" value="ECO:0007669"/>
    <property type="project" value="UniProtKB-SubCell"/>
</dbReference>
<dbReference type="GO" id="GO:1990904">
    <property type="term" value="C:ribonucleoprotein complex"/>
    <property type="evidence" value="ECO:0007669"/>
    <property type="project" value="UniProtKB-KW"/>
</dbReference>
<dbReference type="GO" id="GO:0005840">
    <property type="term" value="C:ribosome"/>
    <property type="evidence" value="ECO:0007669"/>
    <property type="project" value="UniProtKB-KW"/>
</dbReference>
<dbReference type="GO" id="GO:0019843">
    <property type="term" value="F:rRNA binding"/>
    <property type="evidence" value="ECO:0007669"/>
    <property type="project" value="UniProtKB-UniRule"/>
</dbReference>
<dbReference type="GO" id="GO:0003735">
    <property type="term" value="F:structural constituent of ribosome"/>
    <property type="evidence" value="ECO:0007669"/>
    <property type="project" value="InterPro"/>
</dbReference>
<dbReference type="GO" id="GO:0006412">
    <property type="term" value="P:translation"/>
    <property type="evidence" value="ECO:0007669"/>
    <property type="project" value="UniProtKB-UniRule"/>
</dbReference>
<dbReference type="Gene3D" id="3.30.70.330">
    <property type="match status" value="1"/>
</dbReference>
<dbReference type="HAMAP" id="MF_01369_B">
    <property type="entry name" value="Ribosomal_uL23_B"/>
    <property type="match status" value="1"/>
</dbReference>
<dbReference type="InterPro" id="IPR012677">
    <property type="entry name" value="Nucleotide-bd_a/b_plait_sf"/>
</dbReference>
<dbReference type="InterPro" id="IPR013025">
    <property type="entry name" value="Ribosomal_uL23-like"/>
</dbReference>
<dbReference type="InterPro" id="IPR012678">
    <property type="entry name" value="Ribosomal_uL23/eL15/eS24_sf"/>
</dbReference>
<dbReference type="InterPro" id="IPR001014">
    <property type="entry name" value="Ribosomal_uL23_CS"/>
</dbReference>
<dbReference type="PANTHER" id="PTHR11620">
    <property type="entry name" value="60S RIBOSOMAL PROTEIN L23A"/>
    <property type="match status" value="1"/>
</dbReference>
<dbReference type="Pfam" id="PF00276">
    <property type="entry name" value="Ribosomal_L23"/>
    <property type="match status" value="1"/>
</dbReference>
<dbReference type="SUPFAM" id="SSF54189">
    <property type="entry name" value="Ribosomal proteins S24e, L23 and L15e"/>
    <property type="match status" value="1"/>
</dbReference>
<dbReference type="PROSITE" id="PS00050">
    <property type="entry name" value="RIBOSOMAL_L23"/>
    <property type="match status" value="1"/>
</dbReference>
<organism>
    <name type="scientific">Adiantum capillus-veneris</name>
    <name type="common">Maidenhair fern</name>
    <dbReference type="NCBI Taxonomy" id="13818"/>
    <lineage>
        <taxon>Eukaryota</taxon>
        <taxon>Viridiplantae</taxon>
        <taxon>Streptophyta</taxon>
        <taxon>Embryophyta</taxon>
        <taxon>Tracheophyta</taxon>
        <taxon>Polypodiopsida</taxon>
        <taxon>Polypodiidae</taxon>
        <taxon>Polypodiales</taxon>
        <taxon>Pteridineae</taxon>
        <taxon>Pteridaceae</taxon>
        <taxon>Vittarioideae</taxon>
        <taxon>Adiantum</taxon>
    </lineage>
</organism>
<sequence length="93" mass="11058">MDKLKNQVITGKSIRLLQQNQYTFQVDLKLTKTGMKDWIERFFDVKVEGINSSRMTSKNGKKKNKLNITYVSYKKMIVRLKKNYFIPLFMSQT</sequence>
<proteinExistence type="evidence at transcript level"/>
<evidence type="ECO:0000250" key="1"/>
<evidence type="ECO:0000269" key="2">
    <source>
    </source>
</evidence>
<evidence type="ECO:0000305" key="3"/>
<feature type="chain" id="PRO_0000129442" description="Large ribosomal subunit protein uL23c">
    <location>
        <begin position="1"/>
        <end position="93"/>
    </location>
</feature>
<name>RK23_ADICA</name>
<reference key="1">
    <citation type="journal article" date="2003" name="DNA Res.">
        <title>Complete nucleotide sequence of the chloroplast genome from a leptosporangiate fern, Adiantum capillus-veneris L.</title>
        <authorList>
            <person name="Wolf P.G."/>
            <person name="Rowe C.A."/>
            <person name="Sinclair R.B."/>
            <person name="Hasebe M."/>
        </authorList>
    </citation>
    <scope>NUCLEOTIDE SEQUENCE [LARGE SCALE GENOMIC DNA]</scope>
</reference>
<reference key="2">
    <citation type="journal article" date="2004" name="Gene">
        <title>High levels of RNA editing in a vascular plant chloroplast genome: analysis of transcripts from the fern Adiantum capillus-veneris.</title>
        <authorList>
            <person name="Wolf P.G."/>
            <person name="Rowe C.A."/>
            <person name="Hasebe M."/>
        </authorList>
    </citation>
    <scope>NUCLEOTIDE SEQUENCE [GENOMIC DNA]</scope>
    <scope>RNA EDITING</scope>
    <source>
        <tissue>Frond</tissue>
    </source>
</reference>
<accession>Q85FI0</accession>
<comment type="function">
    <text evidence="1">Binds to 23S rRNA.</text>
</comment>
<comment type="subunit">
    <text evidence="1">Part of the 50S ribosomal subunit.</text>
</comment>
<comment type="subcellular location">
    <subcellularLocation>
        <location>Plastid</location>
        <location>Chloroplast</location>
    </subcellularLocation>
</comment>
<comment type="RNA editing">
    <location>
        <position position="1" evidence="2"/>
    </location>
    <location>
        <position position="50" evidence="2"/>
    </location>
    <location>
        <position position="88" evidence="2"/>
    </location>
    <text>The initiator methionine is created by RNA editing.</text>
</comment>
<comment type="similarity">
    <text evidence="3">Belongs to the universal ribosomal protein uL23 family.</text>
</comment>